<gene>
    <name evidence="3" type="primary">SUS1</name>
    <name type="ORF">SCRG_02854</name>
</gene>
<keyword id="KW-0010">Activator</keyword>
<keyword id="KW-0156">Chromatin regulator</keyword>
<keyword id="KW-0963">Cytoplasm</keyword>
<keyword id="KW-1017">Isopeptide bond</keyword>
<keyword id="KW-0509">mRNA transport</keyword>
<keyword id="KW-0539">Nucleus</keyword>
<keyword id="KW-0653">Protein transport</keyword>
<keyword id="KW-0804">Transcription</keyword>
<keyword id="KW-0805">Transcription regulation</keyword>
<keyword id="KW-0811">Translocation</keyword>
<keyword id="KW-0813">Transport</keyword>
<keyword id="KW-0832">Ubl conjugation</keyword>
<comment type="function">
    <text evidence="1">Involved in mRNA export coupled transcription activation by association with both the TREX-2 and the SAGA complexes. At the promoters, SAGA is required for recruitment of the basal transcription machinery. It influences RNA polymerase II transcriptional activity through different activities such as TBP interaction and promoter selectivity, interaction with transcription activators, and chromatin modification through histone acetylation and deubiquitination. Within the SAGA complex, participates in a subcomplex required for deubiquitination of H2B and for the maintenance of steady-state H3 methylation levels. The TREX-2 complex functions in docking export-competent ribonucleoprotein particles (mRNPs) to the nuclear entrance of the nuclear pore complex (nuclear basket). TREX-2 participates in mRNA export and accurate chromatin positioning in the nucleus by tethering genes to the nuclear periphery. May also be involved in cytoplasmic mRNA decay by interaction with components of P-bodies (By similarity).</text>
</comment>
<comment type="subunit">
    <text evidence="3">Component of the nuclear pore complex (NPC)-associated TREX-2 complex (transcription and export complex 2), composed of at least SUS1, SAC3, THP1, SEM1, and CDC31. TREX-2 contains 2 SUS1 chains. The TREX-2 complex interacts with the nucleoporin NUP1. Component of the 1.8 MDa SAGA transcription coactivator-HAT complex. SAGA is built of 5 distinct domains with specialized functions. Within the SAGA complex, SUS1, SGF11, SGF73 and UBP8 form an additional subcomplex of SAGA called the DUB module (deubiquitination module). Interacts directly with THP1, SAC3, SGF11, and with the RNA polymerase II.</text>
</comment>
<comment type="subcellular location">
    <subcellularLocation>
        <location evidence="3">Nucleus</location>
        <location evidence="3">Nucleoplasm</location>
    </subcellularLocation>
    <subcellularLocation>
        <location evidence="3">Cytoplasm</location>
        <location evidence="3">P-body</location>
    </subcellularLocation>
</comment>
<comment type="similarity">
    <text evidence="3">Belongs to the ENY2 family.</text>
</comment>
<name>SUS1_YEAS1</name>
<feature type="chain" id="PRO_0000367573" description="Transcription and mRNA export factor SUS1">
    <location>
        <begin position="1"/>
        <end position="96"/>
    </location>
</feature>
<feature type="cross-link" description="Glycyl lysine isopeptide (Lys-Gly) (interchain with G-Cter in ubiquitin)" evidence="2">
    <location>
        <position position="68"/>
    </location>
</feature>
<protein>
    <recommendedName>
        <fullName evidence="3">Transcription and mRNA export factor SUS1</fullName>
    </recommendedName>
</protein>
<proteinExistence type="inferred from homology"/>
<reference key="1">
    <citation type="submission" date="2005-03" db="EMBL/GenBank/DDBJ databases">
        <title>Annotation of the Saccharomyces cerevisiae RM11-1a genome.</title>
        <authorList>
            <consortium name="The Broad Institute Genome Sequencing Platform"/>
            <person name="Birren B.W."/>
            <person name="Lander E.S."/>
            <person name="Galagan J.E."/>
            <person name="Nusbaum C."/>
            <person name="Devon K."/>
            <person name="Cuomo C."/>
            <person name="Jaffe D.B."/>
            <person name="Butler J."/>
            <person name="Alvarez P."/>
            <person name="Gnerre S."/>
            <person name="Grabherr M."/>
            <person name="Kleber M."/>
            <person name="Mauceli E.W."/>
            <person name="Brockman W."/>
            <person name="MacCallum I.A."/>
            <person name="Rounsley S."/>
            <person name="Young S.K."/>
            <person name="LaButti K."/>
            <person name="Pushparaj V."/>
            <person name="DeCaprio D."/>
            <person name="Crawford M."/>
            <person name="Koehrsen M."/>
            <person name="Engels R."/>
            <person name="Montgomery P."/>
            <person name="Pearson M."/>
            <person name="Howarth C."/>
            <person name="Larson L."/>
            <person name="Luoma S."/>
            <person name="White J."/>
            <person name="O'Leary S."/>
            <person name="Kodira C.D."/>
            <person name="Zeng Q."/>
            <person name="Yandava C."/>
            <person name="Alvarado L."/>
            <person name="Pratt S."/>
            <person name="Kruglyak L."/>
        </authorList>
    </citation>
    <scope>NUCLEOTIDE SEQUENCE [LARGE SCALE GENOMIC DNA]</scope>
    <source>
        <strain>RM11-1a</strain>
    </source>
</reference>
<sequence>MTMDTAQLKSQIQQYLVESGNYELISNELKARLLQEGWVDKVKDLTKSEMNINESTNFTQILSTVEPKALEMVSDSTRETVLKQIREFLEGIVDTQ</sequence>
<evidence type="ECO:0000250" key="1"/>
<evidence type="ECO:0000250" key="2">
    <source>
        <dbReference type="UniProtKB" id="Q6WNK7"/>
    </source>
</evidence>
<evidence type="ECO:0000255" key="3">
    <source>
        <dbReference type="HAMAP-Rule" id="MF_03046"/>
    </source>
</evidence>
<accession>B3LN41</accession>
<dbReference type="EMBL" id="CH408048">
    <property type="protein sequence ID" value="EDV11994.1"/>
    <property type="molecule type" value="Genomic_DNA"/>
</dbReference>
<dbReference type="SMR" id="B3LN41"/>
<dbReference type="HOGENOM" id="CLU_134052_2_1_1"/>
<dbReference type="OrthoDB" id="33716at4893"/>
<dbReference type="Proteomes" id="UP000008335">
    <property type="component" value="Unassembled WGS sequence"/>
</dbReference>
<dbReference type="GO" id="GO:0071819">
    <property type="term" value="C:DUBm complex"/>
    <property type="evidence" value="ECO:0007669"/>
    <property type="project" value="UniProtKB-UniRule"/>
</dbReference>
<dbReference type="GO" id="GO:0005643">
    <property type="term" value="C:nuclear pore"/>
    <property type="evidence" value="ECO:0007669"/>
    <property type="project" value="UniProtKB-UniRule"/>
</dbReference>
<dbReference type="GO" id="GO:0005654">
    <property type="term" value="C:nucleoplasm"/>
    <property type="evidence" value="ECO:0007669"/>
    <property type="project" value="UniProtKB-SubCell"/>
</dbReference>
<dbReference type="GO" id="GO:0000932">
    <property type="term" value="C:P-body"/>
    <property type="evidence" value="ECO:0007669"/>
    <property type="project" value="UniProtKB-SubCell"/>
</dbReference>
<dbReference type="GO" id="GO:0000124">
    <property type="term" value="C:SAGA complex"/>
    <property type="evidence" value="ECO:0007669"/>
    <property type="project" value="UniProtKB-UniRule"/>
</dbReference>
<dbReference type="GO" id="GO:0070390">
    <property type="term" value="C:transcription export complex 2"/>
    <property type="evidence" value="ECO:0007669"/>
    <property type="project" value="UniProtKB-UniRule"/>
</dbReference>
<dbReference type="GO" id="GO:0003713">
    <property type="term" value="F:transcription coactivator activity"/>
    <property type="evidence" value="ECO:0007669"/>
    <property type="project" value="UniProtKB-UniRule"/>
</dbReference>
<dbReference type="GO" id="GO:0006325">
    <property type="term" value="P:chromatin organization"/>
    <property type="evidence" value="ECO:0007669"/>
    <property type="project" value="UniProtKB-KW"/>
</dbReference>
<dbReference type="GO" id="GO:0006406">
    <property type="term" value="P:mRNA export from nucleus"/>
    <property type="evidence" value="ECO:0007669"/>
    <property type="project" value="UniProtKB-UniRule"/>
</dbReference>
<dbReference type="GO" id="GO:0015031">
    <property type="term" value="P:protein transport"/>
    <property type="evidence" value="ECO:0007669"/>
    <property type="project" value="UniProtKB-KW"/>
</dbReference>
<dbReference type="GO" id="GO:0006368">
    <property type="term" value="P:transcription elongation by RNA polymerase II"/>
    <property type="evidence" value="ECO:0007669"/>
    <property type="project" value="UniProtKB-UniRule"/>
</dbReference>
<dbReference type="FunFam" id="1.10.246.140:FF:000004">
    <property type="entry name" value="Transcription and mRNA export factor SUS1"/>
    <property type="match status" value="1"/>
</dbReference>
<dbReference type="Gene3D" id="1.10.246.140">
    <property type="match status" value="1"/>
</dbReference>
<dbReference type="HAMAP" id="MF_03046">
    <property type="entry name" value="ENY2_Sus1"/>
    <property type="match status" value="1"/>
</dbReference>
<dbReference type="InterPro" id="IPR018783">
    <property type="entry name" value="TF_ENY2"/>
</dbReference>
<dbReference type="InterPro" id="IPR038212">
    <property type="entry name" value="TF_EnY2_sf"/>
</dbReference>
<dbReference type="PANTHER" id="PTHR12514">
    <property type="entry name" value="ENHANCER OF YELLOW 2 TRANSCRIPTION FACTOR"/>
    <property type="match status" value="1"/>
</dbReference>
<dbReference type="Pfam" id="PF10163">
    <property type="entry name" value="EnY2"/>
    <property type="match status" value="1"/>
</dbReference>
<organism>
    <name type="scientific">Saccharomyces cerevisiae (strain RM11-1a)</name>
    <name type="common">Baker's yeast</name>
    <dbReference type="NCBI Taxonomy" id="285006"/>
    <lineage>
        <taxon>Eukaryota</taxon>
        <taxon>Fungi</taxon>
        <taxon>Dikarya</taxon>
        <taxon>Ascomycota</taxon>
        <taxon>Saccharomycotina</taxon>
        <taxon>Saccharomycetes</taxon>
        <taxon>Saccharomycetales</taxon>
        <taxon>Saccharomycetaceae</taxon>
        <taxon>Saccharomyces</taxon>
    </lineage>
</organism>